<name>SYS_STRA1</name>
<sequence>MLDLKRIRTDFDVVAKKLATRGVDQETLTTLKELDIKRRELLIKAEEAKAQRNVASAAIAQAKRNKENADEQIAAMQTLSADIKAIDAELADVDANLQSMVTVLPNTPADDVPLGADEDENVEVRRWGTPREFDFETKAHWDLGESLGILDWERGAKVTGSRFLFYKGLGARLERAIYSFMLDEHAKEGYTEVIPPYMVNHDSMFGTGQYPKFKEDTFELADSPFVLIPTAEVPLTNYYRDEIIDGKELPIYFTAMSPSFRSEAGSAGRDTRGLIRLHQFHKVEMVKFAKPEESYQELEKMTANAENILQKLNLPYRVITLCTGDMGFSAAKTYDLEVWIPAQNTYREISSCSNTEDFQARRAQIRYRDEVDGKVRLLHTLNGSGLAVGRTVAAILENYQNEDGSVTIPEVLRPYMGNIDIIKPN</sequence>
<reference key="1">
    <citation type="journal article" date="2005" name="Proc. Natl. Acad. Sci. U.S.A.">
        <title>Genome analysis of multiple pathogenic isolates of Streptococcus agalactiae: implications for the microbial 'pan-genome'.</title>
        <authorList>
            <person name="Tettelin H."/>
            <person name="Masignani V."/>
            <person name="Cieslewicz M.J."/>
            <person name="Donati C."/>
            <person name="Medini D."/>
            <person name="Ward N.L."/>
            <person name="Angiuoli S.V."/>
            <person name="Crabtree J."/>
            <person name="Jones A.L."/>
            <person name="Durkin A.S."/>
            <person name="DeBoy R.T."/>
            <person name="Davidsen T.M."/>
            <person name="Mora M."/>
            <person name="Scarselli M."/>
            <person name="Margarit y Ros I."/>
            <person name="Peterson J.D."/>
            <person name="Hauser C.R."/>
            <person name="Sundaram J.P."/>
            <person name="Nelson W.C."/>
            <person name="Madupu R."/>
            <person name="Brinkac L.M."/>
            <person name="Dodson R.J."/>
            <person name="Rosovitz M.J."/>
            <person name="Sullivan S.A."/>
            <person name="Daugherty S.C."/>
            <person name="Haft D.H."/>
            <person name="Selengut J."/>
            <person name="Gwinn M.L."/>
            <person name="Zhou L."/>
            <person name="Zafar N."/>
            <person name="Khouri H."/>
            <person name="Radune D."/>
            <person name="Dimitrov G."/>
            <person name="Watkins K."/>
            <person name="O'Connor K.J."/>
            <person name="Smith S."/>
            <person name="Utterback T.R."/>
            <person name="White O."/>
            <person name="Rubens C.E."/>
            <person name="Grandi G."/>
            <person name="Madoff L.C."/>
            <person name="Kasper D.L."/>
            <person name="Telford J.L."/>
            <person name="Wessels M.R."/>
            <person name="Rappuoli R."/>
            <person name="Fraser C.M."/>
        </authorList>
    </citation>
    <scope>NUCLEOTIDE SEQUENCE [LARGE SCALE GENOMIC DNA]</scope>
    <source>
        <strain>ATCC 27591 / A909 / CDC SS700</strain>
    </source>
</reference>
<organism>
    <name type="scientific">Streptococcus agalactiae serotype Ia (strain ATCC 27591 / A909 / CDC SS700)</name>
    <dbReference type="NCBI Taxonomy" id="205921"/>
    <lineage>
        <taxon>Bacteria</taxon>
        <taxon>Bacillati</taxon>
        <taxon>Bacillota</taxon>
        <taxon>Bacilli</taxon>
        <taxon>Lactobacillales</taxon>
        <taxon>Streptococcaceae</taxon>
        <taxon>Streptococcus</taxon>
    </lineage>
</organism>
<feature type="chain" id="PRO_1000019835" description="Serine--tRNA ligase">
    <location>
        <begin position="1"/>
        <end position="425"/>
    </location>
</feature>
<feature type="binding site" evidence="1">
    <location>
        <begin position="230"/>
        <end position="232"/>
    </location>
    <ligand>
        <name>L-serine</name>
        <dbReference type="ChEBI" id="CHEBI:33384"/>
    </ligand>
</feature>
<feature type="binding site" evidence="1">
    <location>
        <begin position="261"/>
        <end position="263"/>
    </location>
    <ligand>
        <name>ATP</name>
        <dbReference type="ChEBI" id="CHEBI:30616"/>
    </ligand>
</feature>
<feature type="binding site" evidence="1">
    <location>
        <position position="284"/>
    </location>
    <ligand>
        <name>L-serine</name>
        <dbReference type="ChEBI" id="CHEBI:33384"/>
    </ligand>
</feature>
<feature type="binding site" evidence="1">
    <location>
        <begin position="348"/>
        <end position="351"/>
    </location>
    <ligand>
        <name>ATP</name>
        <dbReference type="ChEBI" id="CHEBI:30616"/>
    </ligand>
</feature>
<feature type="binding site" evidence="1">
    <location>
        <position position="384"/>
    </location>
    <ligand>
        <name>L-serine</name>
        <dbReference type="ChEBI" id="CHEBI:33384"/>
    </ligand>
</feature>
<dbReference type="EC" id="6.1.1.11" evidence="1"/>
<dbReference type="EMBL" id="CP000114">
    <property type="protein sequence ID" value="ABA45625.1"/>
    <property type="molecule type" value="Genomic_DNA"/>
</dbReference>
<dbReference type="RefSeq" id="WP_000886193.1">
    <property type="nucleotide sequence ID" value="NC_007432.1"/>
</dbReference>
<dbReference type="SMR" id="Q3K326"/>
<dbReference type="KEGG" id="sak:SAK_0430"/>
<dbReference type="HOGENOM" id="CLU_023797_1_1_9"/>
<dbReference type="UniPathway" id="UPA00906">
    <property type="reaction ID" value="UER00895"/>
</dbReference>
<dbReference type="GO" id="GO:0005737">
    <property type="term" value="C:cytoplasm"/>
    <property type="evidence" value="ECO:0007669"/>
    <property type="project" value="UniProtKB-SubCell"/>
</dbReference>
<dbReference type="GO" id="GO:0005524">
    <property type="term" value="F:ATP binding"/>
    <property type="evidence" value="ECO:0007669"/>
    <property type="project" value="UniProtKB-UniRule"/>
</dbReference>
<dbReference type="GO" id="GO:0140096">
    <property type="term" value="F:catalytic activity, acting on a protein"/>
    <property type="evidence" value="ECO:0007669"/>
    <property type="project" value="UniProtKB-ARBA"/>
</dbReference>
<dbReference type="GO" id="GO:0004828">
    <property type="term" value="F:serine-tRNA ligase activity"/>
    <property type="evidence" value="ECO:0007669"/>
    <property type="project" value="UniProtKB-UniRule"/>
</dbReference>
<dbReference type="GO" id="GO:0016740">
    <property type="term" value="F:transferase activity"/>
    <property type="evidence" value="ECO:0007669"/>
    <property type="project" value="UniProtKB-ARBA"/>
</dbReference>
<dbReference type="GO" id="GO:0016260">
    <property type="term" value="P:selenocysteine biosynthetic process"/>
    <property type="evidence" value="ECO:0007669"/>
    <property type="project" value="UniProtKB-UniRule"/>
</dbReference>
<dbReference type="GO" id="GO:0006434">
    <property type="term" value="P:seryl-tRNA aminoacylation"/>
    <property type="evidence" value="ECO:0007669"/>
    <property type="project" value="UniProtKB-UniRule"/>
</dbReference>
<dbReference type="CDD" id="cd00770">
    <property type="entry name" value="SerRS_core"/>
    <property type="match status" value="1"/>
</dbReference>
<dbReference type="Gene3D" id="3.30.930.10">
    <property type="entry name" value="Bira Bifunctional Protein, Domain 2"/>
    <property type="match status" value="1"/>
</dbReference>
<dbReference type="Gene3D" id="1.10.287.40">
    <property type="entry name" value="Serine-tRNA synthetase, tRNA binding domain"/>
    <property type="match status" value="1"/>
</dbReference>
<dbReference type="HAMAP" id="MF_00176">
    <property type="entry name" value="Ser_tRNA_synth_type1"/>
    <property type="match status" value="1"/>
</dbReference>
<dbReference type="InterPro" id="IPR002314">
    <property type="entry name" value="aa-tRNA-synt_IIb"/>
</dbReference>
<dbReference type="InterPro" id="IPR006195">
    <property type="entry name" value="aa-tRNA-synth_II"/>
</dbReference>
<dbReference type="InterPro" id="IPR045864">
    <property type="entry name" value="aa-tRNA-synth_II/BPL/LPL"/>
</dbReference>
<dbReference type="InterPro" id="IPR002317">
    <property type="entry name" value="Ser-tRNA-ligase_type_1"/>
</dbReference>
<dbReference type="InterPro" id="IPR015866">
    <property type="entry name" value="Ser-tRNA-synth_1_N"/>
</dbReference>
<dbReference type="InterPro" id="IPR042103">
    <property type="entry name" value="SerRS_1_N_sf"/>
</dbReference>
<dbReference type="InterPro" id="IPR033729">
    <property type="entry name" value="SerRS_core"/>
</dbReference>
<dbReference type="InterPro" id="IPR010978">
    <property type="entry name" value="tRNA-bd_arm"/>
</dbReference>
<dbReference type="NCBIfam" id="TIGR00414">
    <property type="entry name" value="serS"/>
    <property type="match status" value="1"/>
</dbReference>
<dbReference type="PANTHER" id="PTHR43697:SF1">
    <property type="entry name" value="SERINE--TRNA LIGASE"/>
    <property type="match status" value="1"/>
</dbReference>
<dbReference type="PANTHER" id="PTHR43697">
    <property type="entry name" value="SERYL-TRNA SYNTHETASE"/>
    <property type="match status" value="1"/>
</dbReference>
<dbReference type="Pfam" id="PF02403">
    <property type="entry name" value="Seryl_tRNA_N"/>
    <property type="match status" value="1"/>
</dbReference>
<dbReference type="Pfam" id="PF00587">
    <property type="entry name" value="tRNA-synt_2b"/>
    <property type="match status" value="1"/>
</dbReference>
<dbReference type="PIRSF" id="PIRSF001529">
    <property type="entry name" value="Ser-tRNA-synth_IIa"/>
    <property type="match status" value="1"/>
</dbReference>
<dbReference type="PRINTS" id="PR00981">
    <property type="entry name" value="TRNASYNTHSER"/>
</dbReference>
<dbReference type="SUPFAM" id="SSF55681">
    <property type="entry name" value="Class II aaRS and biotin synthetases"/>
    <property type="match status" value="1"/>
</dbReference>
<dbReference type="SUPFAM" id="SSF46589">
    <property type="entry name" value="tRNA-binding arm"/>
    <property type="match status" value="1"/>
</dbReference>
<dbReference type="PROSITE" id="PS50862">
    <property type="entry name" value="AA_TRNA_LIGASE_II"/>
    <property type="match status" value="1"/>
</dbReference>
<proteinExistence type="inferred from homology"/>
<keyword id="KW-0030">Aminoacyl-tRNA synthetase</keyword>
<keyword id="KW-0067">ATP-binding</keyword>
<keyword id="KW-0963">Cytoplasm</keyword>
<keyword id="KW-0436">Ligase</keyword>
<keyword id="KW-0547">Nucleotide-binding</keyword>
<keyword id="KW-0648">Protein biosynthesis</keyword>
<gene>
    <name evidence="1" type="primary">serS</name>
    <name type="ordered locus">SAK_0430</name>
</gene>
<evidence type="ECO:0000255" key="1">
    <source>
        <dbReference type="HAMAP-Rule" id="MF_00176"/>
    </source>
</evidence>
<protein>
    <recommendedName>
        <fullName evidence="1">Serine--tRNA ligase</fullName>
        <ecNumber evidence="1">6.1.1.11</ecNumber>
    </recommendedName>
    <alternativeName>
        <fullName evidence="1">Seryl-tRNA synthetase</fullName>
        <shortName evidence="1">SerRS</shortName>
    </alternativeName>
    <alternativeName>
        <fullName evidence="1">Seryl-tRNA(Ser/Sec) synthetase</fullName>
    </alternativeName>
</protein>
<comment type="function">
    <text evidence="1">Catalyzes the attachment of serine to tRNA(Ser). Is also able to aminoacylate tRNA(Sec) with serine, to form the misacylated tRNA L-seryl-tRNA(Sec), which will be further converted into selenocysteinyl-tRNA(Sec).</text>
</comment>
<comment type="catalytic activity">
    <reaction evidence="1">
        <text>tRNA(Ser) + L-serine + ATP = L-seryl-tRNA(Ser) + AMP + diphosphate + H(+)</text>
        <dbReference type="Rhea" id="RHEA:12292"/>
        <dbReference type="Rhea" id="RHEA-COMP:9669"/>
        <dbReference type="Rhea" id="RHEA-COMP:9703"/>
        <dbReference type="ChEBI" id="CHEBI:15378"/>
        <dbReference type="ChEBI" id="CHEBI:30616"/>
        <dbReference type="ChEBI" id="CHEBI:33019"/>
        <dbReference type="ChEBI" id="CHEBI:33384"/>
        <dbReference type="ChEBI" id="CHEBI:78442"/>
        <dbReference type="ChEBI" id="CHEBI:78533"/>
        <dbReference type="ChEBI" id="CHEBI:456215"/>
        <dbReference type="EC" id="6.1.1.11"/>
    </reaction>
</comment>
<comment type="catalytic activity">
    <reaction evidence="1">
        <text>tRNA(Sec) + L-serine + ATP = L-seryl-tRNA(Sec) + AMP + diphosphate + H(+)</text>
        <dbReference type="Rhea" id="RHEA:42580"/>
        <dbReference type="Rhea" id="RHEA-COMP:9742"/>
        <dbReference type="Rhea" id="RHEA-COMP:10128"/>
        <dbReference type="ChEBI" id="CHEBI:15378"/>
        <dbReference type="ChEBI" id="CHEBI:30616"/>
        <dbReference type="ChEBI" id="CHEBI:33019"/>
        <dbReference type="ChEBI" id="CHEBI:33384"/>
        <dbReference type="ChEBI" id="CHEBI:78442"/>
        <dbReference type="ChEBI" id="CHEBI:78533"/>
        <dbReference type="ChEBI" id="CHEBI:456215"/>
        <dbReference type="EC" id="6.1.1.11"/>
    </reaction>
</comment>
<comment type="pathway">
    <text evidence="1">Aminoacyl-tRNA biosynthesis; selenocysteinyl-tRNA(Sec) biosynthesis; L-seryl-tRNA(Sec) from L-serine and tRNA(Sec): step 1/1.</text>
</comment>
<comment type="subunit">
    <text evidence="1">Homodimer. The tRNA molecule binds across the dimer.</text>
</comment>
<comment type="subcellular location">
    <subcellularLocation>
        <location evidence="1">Cytoplasm</location>
    </subcellularLocation>
</comment>
<comment type="domain">
    <text evidence="1">Consists of two distinct domains, a catalytic core and a N-terminal extension that is involved in tRNA binding.</text>
</comment>
<comment type="similarity">
    <text evidence="1">Belongs to the class-II aminoacyl-tRNA synthetase family. Type-1 seryl-tRNA synthetase subfamily.</text>
</comment>
<accession>Q3K326</accession>